<gene>
    <name type="primary">OR2A5</name>
    <name type="synonym">OR2A26</name>
    <name type="synonym">OR2A8</name>
</gene>
<evidence type="ECO:0000255" key="1"/>
<evidence type="ECO:0000255" key="2">
    <source>
        <dbReference type="PROSITE-ProRule" id="PRU00521"/>
    </source>
</evidence>
<evidence type="ECO:0000305" key="3"/>
<reference key="1">
    <citation type="journal article" date="2003" name="Nature">
        <title>The DNA sequence of human chromosome 7.</title>
        <authorList>
            <person name="Hillier L.W."/>
            <person name="Fulton R.S."/>
            <person name="Fulton L.A."/>
            <person name="Graves T.A."/>
            <person name="Pepin K.H."/>
            <person name="Wagner-McPherson C."/>
            <person name="Layman D."/>
            <person name="Maas J."/>
            <person name="Jaeger S."/>
            <person name="Walker R."/>
            <person name="Wylie K."/>
            <person name="Sekhon M."/>
            <person name="Becker M.C."/>
            <person name="O'Laughlin M.D."/>
            <person name="Schaller M.E."/>
            <person name="Fewell G.A."/>
            <person name="Delehaunty K.D."/>
            <person name="Miner T.L."/>
            <person name="Nash W.E."/>
            <person name="Cordes M."/>
            <person name="Du H."/>
            <person name="Sun H."/>
            <person name="Edwards J."/>
            <person name="Bradshaw-Cordum H."/>
            <person name="Ali J."/>
            <person name="Andrews S."/>
            <person name="Isak A."/>
            <person name="Vanbrunt A."/>
            <person name="Nguyen C."/>
            <person name="Du F."/>
            <person name="Lamar B."/>
            <person name="Courtney L."/>
            <person name="Kalicki J."/>
            <person name="Ozersky P."/>
            <person name="Bielicki L."/>
            <person name="Scott K."/>
            <person name="Holmes A."/>
            <person name="Harkins R."/>
            <person name="Harris A."/>
            <person name="Strong C.M."/>
            <person name="Hou S."/>
            <person name="Tomlinson C."/>
            <person name="Dauphin-Kohlberg S."/>
            <person name="Kozlowicz-Reilly A."/>
            <person name="Leonard S."/>
            <person name="Rohlfing T."/>
            <person name="Rock S.M."/>
            <person name="Tin-Wollam A.-M."/>
            <person name="Abbott A."/>
            <person name="Minx P."/>
            <person name="Maupin R."/>
            <person name="Strowmatt C."/>
            <person name="Latreille P."/>
            <person name="Miller N."/>
            <person name="Johnson D."/>
            <person name="Murray J."/>
            <person name="Woessner J.P."/>
            <person name="Wendl M.C."/>
            <person name="Yang S.-P."/>
            <person name="Schultz B.R."/>
            <person name="Wallis J.W."/>
            <person name="Spieth J."/>
            <person name="Bieri T.A."/>
            <person name="Nelson J.O."/>
            <person name="Berkowicz N."/>
            <person name="Wohldmann P.E."/>
            <person name="Cook L.L."/>
            <person name="Hickenbotham M.T."/>
            <person name="Eldred J."/>
            <person name="Williams D."/>
            <person name="Bedell J.A."/>
            <person name="Mardis E.R."/>
            <person name="Clifton S.W."/>
            <person name="Chissoe S.L."/>
            <person name="Marra M.A."/>
            <person name="Raymond C."/>
            <person name="Haugen E."/>
            <person name="Gillett W."/>
            <person name="Zhou Y."/>
            <person name="James R."/>
            <person name="Phelps K."/>
            <person name="Iadanoto S."/>
            <person name="Bubb K."/>
            <person name="Simms E."/>
            <person name="Levy R."/>
            <person name="Clendenning J."/>
            <person name="Kaul R."/>
            <person name="Kent W.J."/>
            <person name="Furey T.S."/>
            <person name="Baertsch R.A."/>
            <person name="Brent M.R."/>
            <person name="Keibler E."/>
            <person name="Flicek P."/>
            <person name="Bork P."/>
            <person name="Suyama M."/>
            <person name="Bailey J.A."/>
            <person name="Portnoy M.E."/>
            <person name="Torrents D."/>
            <person name="Chinwalla A.T."/>
            <person name="Gish W.R."/>
            <person name="Eddy S.R."/>
            <person name="McPherson J.D."/>
            <person name="Olson M.V."/>
            <person name="Eichler E.E."/>
            <person name="Green E.D."/>
            <person name="Waterston R.H."/>
            <person name="Wilson R.K."/>
        </authorList>
    </citation>
    <scope>NUCLEOTIDE SEQUENCE [LARGE SCALE GENOMIC DNA]</scope>
</reference>
<reference key="2">
    <citation type="journal article" date="2004" name="Genome Res.">
        <title>The status, quality, and expansion of the NIH full-length cDNA project: the Mammalian Gene Collection (MGC).</title>
        <authorList>
            <consortium name="The MGC Project Team"/>
        </authorList>
    </citation>
    <scope>NUCLEOTIDE SEQUENCE [LARGE SCALE MRNA]</scope>
    <source>
        <tissue>Testis</tissue>
    </source>
</reference>
<reference key="3">
    <citation type="journal article" date="1998" name="Nat. Genet.">
        <title>Distribution of olfactory receptor genes in the human genome.</title>
        <authorList>
            <person name="Rouquier S."/>
            <person name="Taviaux S."/>
            <person name="Trask B.J."/>
            <person name="Brand-Arpon V."/>
            <person name="Van den Engh G."/>
            <person name="Demaille J.G."/>
            <person name="Giorgi D."/>
        </authorList>
    </citation>
    <scope>NUCLEOTIDE SEQUENCE [GENOMIC DNA] OF 67-283</scope>
</reference>
<reference key="4">
    <citation type="journal article" date="2002" name="Genomics">
        <title>DEFOG: a practical scheme for deciphering families of genes.</title>
        <authorList>
            <person name="Fuchs T."/>
            <person name="Malecova B."/>
            <person name="Linhart C."/>
            <person name="Sharan R."/>
            <person name="Khen M."/>
            <person name="Herwig R."/>
            <person name="Shmulevich D."/>
            <person name="Elkon R."/>
            <person name="Steinfath M."/>
            <person name="O'Brien J.K."/>
            <person name="Radelof U."/>
            <person name="Lehrach H."/>
            <person name="Lancet D."/>
            <person name="Shamir R."/>
        </authorList>
    </citation>
    <scope>NUCLEOTIDE SEQUENCE [GENOMIC DNA] OF 67-283</scope>
</reference>
<sequence length="311" mass="35207">MTKNQTWVTEFILLGFPLSLRIQMLLSGLFSLLYVFTLLGNGAILGLIWLDSRLHTPMYFFLSHLAIIDISYASNNVPKMLTNLGLNKRKTISFVPCTMQTFLYMAFAHTECLILVMMSYDRYMAICHPLQYSVIMRWGVCTVLAVTSWACGSLLALVHVVLILRLPFCGPHEINHFFCEILSVLKLACADTWLNQVVIFAASVFILVGPLCLVLVSYSRILAAILRIQSGEGRRKAFSTCSSHLCMVGLFFGSAIVMYMAPKSRHPEEQQKVLSLFYSLFNPMLNPLIYSLRNAEVKGALKRVLWKQRSK</sequence>
<name>OR2A5_HUMAN</name>
<proteinExistence type="evidence at transcript level"/>
<dbReference type="EMBL" id="AC091768">
    <property type="status" value="NOT_ANNOTATED_CDS"/>
    <property type="molecule type" value="Genomic_DNA"/>
</dbReference>
<dbReference type="EMBL" id="BC136860">
    <property type="protein sequence ID" value="AAI36861.1"/>
    <property type="molecule type" value="mRNA"/>
</dbReference>
<dbReference type="EMBL" id="U86278">
    <property type="protein sequence ID" value="AAC39630.1"/>
    <property type="molecule type" value="Genomic_DNA"/>
</dbReference>
<dbReference type="EMBL" id="U86281">
    <property type="protein sequence ID" value="AAC39633.1"/>
    <property type="molecule type" value="Genomic_DNA"/>
</dbReference>
<dbReference type="EMBL" id="AF399595">
    <property type="protein sequence ID" value="AAK95080.1"/>
    <property type="molecule type" value="Genomic_DNA"/>
</dbReference>
<dbReference type="CCDS" id="CCDS43668.1"/>
<dbReference type="RefSeq" id="NP_036497.1">
    <property type="nucleotide sequence ID" value="NM_012365.2"/>
</dbReference>
<dbReference type="SMR" id="Q96R48"/>
<dbReference type="FunCoup" id="Q96R48">
    <property type="interactions" value="499"/>
</dbReference>
<dbReference type="STRING" id="9606.ENSP00000493295"/>
<dbReference type="GlyCosmos" id="Q96R48">
    <property type="glycosylation" value="1 site, No reported glycans"/>
</dbReference>
<dbReference type="GlyGen" id="Q96R48">
    <property type="glycosylation" value="1 site"/>
</dbReference>
<dbReference type="iPTMnet" id="Q96R48"/>
<dbReference type="PhosphoSitePlus" id="Q96R48"/>
<dbReference type="BioMuta" id="OR2A5"/>
<dbReference type="DMDM" id="85692724"/>
<dbReference type="MassIVE" id="Q96R48"/>
<dbReference type="PaxDb" id="9606-ENSP00000386208"/>
<dbReference type="Antibodypedia" id="32700">
    <property type="antibodies" value="79 antibodies from 18 providers"/>
</dbReference>
<dbReference type="DNASU" id="393046"/>
<dbReference type="Ensembl" id="ENST00000641693.1">
    <property type="protein sequence ID" value="ENSP00000493295.1"/>
    <property type="gene ID" value="ENSG00000221836.4"/>
</dbReference>
<dbReference type="Ensembl" id="ENST00000645588.1">
    <property type="protein sequence ID" value="ENSP00000496685.1"/>
    <property type="gene ID" value="ENSG00000284896.2"/>
</dbReference>
<dbReference type="GeneID" id="393046"/>
<dbReference type="KEGG" id="hsa:393046"/>
<dbReference type="MANE-Select" id="ENST00000641693.1">
    <property type="protein sequence ID" value="ENSP00000493295.1"/>
    <property type="RefSeq nucleotide sequence ID" value="NM_012365.2"/>
    <property type="RefSeq protein sequence ID" value="NP_036497.1"/>
</dbReference>
<dbReference type="UCSC" id="uc011ktw.3">
    <property type="organism name" value="human"/>
</dbReference>
<dbReference type="AGR" id="HGNC:8232"/>
<dbReference type="CTD" id="393046"/>
<dbReference type="DisGeNET" id="393046"/>
<dbReference type="GeneCards" id="OR2A5"/>
<dbReference type="HGNC" id="HGNC:8232">
    <property type="gene designation" value="OR2A5"/>
</dbReference>
<dbReference type="HPA" id="ENSG00000221836">
    <property type="expression patterns" value="Not detected"/>
</dbReference>
<dbReference type="neXtProt" id="NX_Q96R48"/>
<dbReference type="OpenTargets" id="ENSG00000221836"/>
<dbReference type="PharmGKB" id="PA32118"/>
<dbReference type="VEuPathDB" id="HostDB:ENSG00000221836"/>
<dbReference type="eggNOG" id="ENOG502SIA2">
    <property type="taxonomic scope" value="Eukaryota"/>
</dbReference>
<dbReference type="GeneTree" id="ENSGT00940000153255"/>
<dbReference type="HOGENOM" id="CLU_012526_1_2_1"/>
<dbReference type="InParanoid" id="Q96R48"/>
<dbReference type="OMA" id="VLWKERS"/>
<dbReference type="OrthoDB" id="6147321at2759"/>
<dbReference type="PAN-GO" id="Q96R48">
    <property type="GO annotations" value="0 GO annotations based on evolutionary models"/>
</dbReference>
<dbReference type="PhylomeDB" id="Q96R48"/>
<dbReference type="TreeFam" id="TF337251"/>
<dbReference type="PathwayCommons" id="Q96R48"/>
<dbReference type="Reactome" id="R-HSA-9752946">
    <property type="pathway name" value="Expression and translocation of olfactory receptors"/>
</dbReference>
<dbReference type="BioGRID-ORCS" id="393046">
    <property type="hits" value="12 hits in 731 CRISPR screens"/>
</dbReference>
<dbReference type="GeneWiki" id="OR2A5"/>
<dbReference type="GenomeRNAi" id="393046"/>
<dbReference type="Pharos" id="Q96R48">
    <property type="development level" value="Tdark"/>
</dbReference>
<dbReference type="PRO" id="PR:Q96R48"/>
<dbReference type="Proteomes" id="UP000005640">
    <property type="component" value="Chromosome 7"/>
</dbReference>
<dbReference type="RNAct" id="Q96R48">
    <property type="molecule type" value="protein"/>
</dbReference>
<dbReference type="Bgee" id="ENSG00000221836">
    <property type="expression patterns" value="Expressed in male germ line stem cell (sensu Vertebrata) in testis and 80 other cell types or tissues"/>
</dbReference>
<dbReference type="ExpressionAtlas" id="Q96R48">
    <property type="expression patterns" value="baseline and differential"/>
</dbReference>
<dbReference type="GO" id="GO:0005886">
    <property type="term" value="C:plasma membrane"/>
    <property type="evidence" value="ECO:0000318"/>
    <property type="project" value="GO_Central"/>
</dbReference>
<dbReference type="GO" id="GO:0004930">
    <property type="term" value="F:G protein-coupled receptor activity"/>
    <property type="evidence" value="ECO:0007669"/>
    <property type="project" value="UniProtKB-KW"/>
</dbReference>
<dbReference type="GO" id="GO:0004984">
    <property type="term" value="F:olfactory receptor activity"/>
    <property type="evidence" value="ECO:0000318"/>
    <property type="project" value="GO_Central"/>
</dbReference>
<dbReference type="GO" id="GO:0050911">
    <property type="term" value="P:detection of chemical stimulus involved in sensory perception of smell"/>
    <property type="evidence" value="ECO:0000318"/>
    <property type="project" value="GO_Central"/>
</dbReference>
<dbReference type="CDD" id="cd15420">
    <property type="entry name" value="7tmA_OR2A-like"/>
    <property type="match status" value="1"/>
</dbReference>
<dbReference type="FunFam" id="1.10.1220.70:FF:000001">
    <property type="entry name" value="Olfactory receptor"/>
    <property type="match status" value="1"/>
</dbReference>
<dbReference type="FunFam" id="1.20.1070.10:FF:000008">
    <property type="entry name" value="Olfactory receptor"/>
    <property type="match status" value="1"/>
</dbReference>
<dbReference type="Gene3D" id="1.20.1070.10">
    <property type="entry name" value="Rhodopsin 7-helix transmembrane proteins"/>
    <property type="match status" value="1"/>
</dbReference>
<dbReference type="InterPro" id="IPR000276">
    <property type="entry name" value="GPCR_Rhodpsn"/>
</dbReference>
<dbReference type="InterPro" id="IPR017452">
    <property type="entry name" value="GPCR_Rhodpsn_7TM"/>
</dbReference>
<dbReference type="InterPro" id="IPR000725">
    <property type="entry name" value="Olfact_rcpt"/>
</dbReference>
<dbReference type="PANTHER" id="PTHR26453">
    <property type="entry name" value="OLFACTORY RECEPTOR"/>
    <property type="match status" value="1"/>
</dbReference>
<dbReference type="Pfam" id="PF13853">
    <property type="entry name" value="7tm_4"/>
    <property type="match status" value="1"/>
</dbReference>
<dbReference type="PRINTS" id="PR00237">
    <property type="entry name" value="GPCRRHODOPSN"/>
</dbReference>
<dbReference type="PRINTS" id="PR00245">
    <property type="entry name" value="OLFACTORYR"/>
</dbReference>
<dbReference type="SUPFAM" id="SSF81321">
    <property type="entry name" value="Family A G protein-coupled receptor-like"/>
    <property type="match status" value="1"/>
</dbReference>
<dbReference type="PROSITE" id="PS00237">
    <property type="entry name" value="G_PROTEIN_RECEP_F1_1"/>
    <property type="match status" value="1"/>
</dbReference>
<dbReference type="PROSITE" id="PS50262">
    <property type="entry name" value="G_PROTEIN_RECEP_F1_2"/>
    <property type="match status" value="1"/>
</dbReference>
<feature type="chain" id="PRO_0000150455" description="Olfactory receptor 2A5">
    <location>
        <begin position="1"/>
        <end position="311"/>
    </location>
</feature>
<feature type="topological domain" description="Extracellular" evidence="1">
    <location>
        <begin position="1"/>
        <end position="24"/>
    </location>
</feature>
<feature type="transmembrane region" description="Helical; Name=1" evidence="1">
    <location>
        <begin position="25"/>
        <end position="48"/>
    </location>
</feature>
<feature type="topological domain" description="Cytoplasmic" evidence="1">
    <location>
        <begin position="49"/>
        <end position="56"/>
    </location>
</feature>
<feature type="transmembrane region" description="Helical; Name=2" evidence="1">
    <location>
        <begin position="57"/>
        <end position="78"/>
    </location>
</feature>
<feature type="topological domain" description="Extracellular" evidence="1">
    <location>
        <begin position="79"/>
        <end position="100"/>
    </location>
</feature>
<feature type="transmembrane region" description="Helical; Name=3" evidence="1">
    <location>
        <begin position="101"/>
        <end position="120"/>
    </location>
</feature>
<feature type="topological domain" description="Cytoplasmic" evidence="1">
    <location>
        <begin position="121"/>
        <end position="139"/>
    </location>
</feature>
<feature type="transmembrane region" description="Helical; Name=4" evidence="1">
    <location>
        <begin position="140"/>
        <end position="158"/>
    </location>
</feature>
<feature type="topological domain" description="Extracellular" evidence="1">
    <location>
        <begin position="159"/>
        <end position="196"/>
    </location>
</feature>
<feature type="transmembrane region" description="Helical; Name=5" evidence="1">
    <location>
        <begin position="197"/>
        <end position="219"/>
    </location>
</feature>
<feature type="topological domain" description="Cytoplasmic" evidence="1">
    <location>
        <begin position="220"/>
        <end position="236"/>
    </location>
</feature>
<feature type="transmembrane region" description="Helical; Name=6" evidence="1">
    <location>
        <begin position="237"/>
        <end position="259"/>
    </location>
</feature>
<feature type="topological domain" description="Extracellular" evidence="1">
    <location>
        <begin position="260"/>
        <end position="272"/>
    </location>
</feature>
<feature type="transmembrane region" description="Helical; Name=7" evidence="1">
    <location>
        <begin position="273"/>
        <end position="292"/>
    </location>
</feature>
<feature type="topological domain" description="Cytoplasmic" evidence="1">
    <location>
        <begin position="293"/>
        <end position="311"/>
    </location>
</feature>
<feature type="glycosylation site" description="N-linked (GlcNAc...) asparagine" evidence="1">
    <location>
        <position position="4"/>
    </location>
</feature>
<feature type="disulfide bond" evidence="2">
    <location>
        <begin position="97"/>
        <end position="189"/>
    </location>
</feature>
<feature type="sequence variant" id="VAR_053129" description="In dbSNP:rs2961144.">
    <original>I</original>
    <variation>V</variation>
    <location>
        <position position="126"/>
    </location>
</feature>
<feature type="sequence variant" id="VAR_053130" description="In dbSNP:rs6464573.">
    <original>A</original>
    <variation>S</variation>
    <location>
        <position position="202"/>
    </location>
</feature>
<feature type="sequence variant" id="VAR_059984" description="In dbSNP:rs6464574.">
    <original>A</original>
    <variation>T</variation>
    <location>
        <position position="255"/>
    </location>
</feature>
<feature type="sequence conflict" description="In Ref. 3; AAC39633 and 4; AAK95080." evidence="3" ref="3 4">
    <original>N</original>
    <variation>K</variation>
    <location>
        <position position="76"/>
    </location>
</feature>
<feature type="sequence conflict" description="In Ref. 3; AAC39630 and 4; AAK95080." evidence="3" ref="3 4">
    <original>R</original>
    <variation>G</variation>
    <location>
        <position position="227"/>
    </location>
</feature>
<keyword id="KW-1003">Cell membrane</keyword>
<keyword id="KW-1015">Disulfide bond</keyword>
<keyword id="KW-0297">G-protein coupled receptor</keyword>
<keyword id="KW-0325">Glycoprotein</keyword>
<keyword id="KW-0472">Membrane</keyword>
<keyword id="KW-0552">Olfaction</keyword>
<keyword id="KW-0675">Receptor</keyword>
<keyword id="KW-1185">Reference proteome</keyword>
<keyword id="KW-0716">Sensory transduction</keyword>
<keyword id="KW-0807">Transducer</keyword>
<keyword id="KW-0812">Transmembrane</keyword>
<keyword id="KW-1133">Transmembrane helix</keyword>
<protein>
    <recommendedName>
        <fullName>Olfactory receptor 2A5</fullName>
    </recommendedName>
    <alternativeName>
        <fullName>Olfactory receptor 2A26</fullName>
    </alternativeName>
    <alternativeName>
        <fullName>Olfactory receptor 2A8</fullName>
    </alternativeName>
    <alternativeName>
        <fullName>Olfactory receptor 7-138/7-141</fullName>
        <shortName>OR7-138</shortName>
        <shortName>OR7-141</shortName>
    </alternativeName>
</protein>
<accession>Q96R48</accession>
<accession>B9EGX2</accession>
<accession>O43885</accession>
<accession>O43888</accession>
<organism>
    <name type="scientific">Homo sapiens</name>
    <name type="common">Human</name>
    <dbReference type="NCBI Taxonomy" id="9606"/>
    <lineage>
        <taxon>Eukaryota</taxon>
        <taxon>Metazoa</taxon>
        <taxon>Chordata</taxon>
        <taxon>Craniata</taxon>
        <taxon>Vertebrata</taxon>
        <taxon>Euteleostomi</taxon>
        <taxon>Mammalia</taxon>
        <taxon>Eutheria</taxon>
        <taxon>Euarchontoglires</taxon>
        <taxon>Primates</taxon>
        <taxon>Haplorrhini</taxon>
        <taxon>Catarrhini</taxon>
        <taxon>Hominidae</taxon>
        <taxon>Homo</taxon>
    </lineage>
</organism>
<comment type="function">
    <text evidence="3">Odorant receptor.</text>
</comment>
<comment type="subcellular location">
    <subcellularLocation>
        <location>Cell membrane</location>
        <topology>Multi-pass membrane protein</topology>
    </subcellularLocation>
</comment>
<comment type="similarity">
    <text evidence="2">Belongs to the G-protein coupled receptor 1 family.</text>
</comment>
<comment type="online information" name="Human Olfactory Receptor Data Exploratorium (HORDE)">
    <link uri="http://genome.weizmann.ac.il/horde/card/index/symbol:OR2A5"/>
</comment>